<protein>
    <recommendedName>
        <fullName evidence="1">Ferredoxin--NADP reductase</fullName>
        <shortName evidence="1">FNR</shortName>
        <shortName evidence="1">Fd-NADP(+) reductase</shortName>
        <ecNumber evidence="1">1.18.1.2</ecNumber>
    </recommendedName>
</protein>
<proteinExistence type="inferred from homology"/>
<sequence>MTSAATLNADSPQPVEQRTDVLVVGAGPVGLFAAFQAGVLGMSCVLVDALDRPGGQCTELYPEKPIYDIPALVSCTAQELVDRLMAQCAPFNYPILCGRRAETVETLENEHGRRFRVTTSAGDVFDCAAVLITAGNGAFTPQRVALPEAAALEGRHLHYAVRDTARFTGKRVVIAGGGDSALDWALALRKVAARVTLVHRREGFRAADASVAEMRAAVVAGEMDFVLGMLSRLDSTPDGTLIGAAIRGRDGETVLPCDELIALYGLVSEPGPIVNWGVEMRAGRITVETTAYETSRPGVFAAGDIALYPNKQKLILSGFHEVAMALRRAYRYANPDKTLVHTHSSNDAGLQTKLHVTAE</sequence>
<accession>B2U9D2</accession>
<gene>
    <name type="ordered locus">Rpic_0981</name>
</gene>
<dbReference type="EC" id="1.18.1.2" evidence="1"/>
<dbReference type="EMBL" id="CP001068">
    <property type="protein sequence ID" value="ACD26129.1"/>
    <property type="molecule type" value="Genomic_DNA"/>
</dbReference>
<dbReference type="SMR" id="B2U9D2"/>
<dbReference type="STRING" id="402626.Rpic_0981"/>
<dbReference type="KEGG" id="rpi:Rpic_0981"/>
<dbReference type="PATRIC" id="fig|402626.5.peg.2182"/>
<dbReference type="eggNOG" id="COG0492">
    <property type="taxonomic scope" value="Bacteria"/>
</dbReference>
<dbReference type="HOGENOM" id="CLU_031864_5_5_4"/>
<dbReference type="GO" id="GO:0004324">
    <property type="term" value="F:ferredoxin-NADP+ reductase activity"/>
    <property type="evidence" value="ECO:0007669"/>
    <property type="project" value="UniProtKB-UniRule"/>
</dbReference>
<dbReference type="GO" id="GO:0050660">
    <property type="term" value="F:flavin adenine dinucleotide binding"/>
    <property type="evidence" value="ECO:0007669"/>
    <property type="project" value="UniProtKB-UniRule"/>
</dbReference>
<dbReference type="GO" id="GO:0050661">
    <property type="term" value="F:NADP binding"/>
    <property type="evidence" value="ECO:0007669"/>
    <property type="project" value="UniProtKB-UniRule"/>
</dbReference>
<dbReference type="Gene3D" id="3.50.50.60">
    <property type="entry name" value="FAD/NAD(P)-binding domain"/>
    <property type="match status" value="2"/>
</dbReference>
<dbReference type="HAMAP" id="MF_01685">
    <property type="entry name" value="FENR2"/>
    <property type="match status" value="1"/>
</dbReference>
<dbReference type="InterPro" id="IPR036188">
    <property type="entry name" value="FAD/NAD-bd_sf"/>
</dbReference>
<dbReference type="InterPro" id="IPR023753">
    <property type="entry name" value="FAD/NAD-binding_dom"/>
</dbReference>
<dbReference type="InterPro" id="IPR022890">
    <property type="entry name" value="Fd--NADP_Rdtase_type_2"/>
</dbReference>
<dbReference type="InterPro" id="IPR050097">
    <property type="entry name" value="Ferredoxin-NADP_redctase_2"/>
</dbReference>
<dbReference type="PANTHER" id="PTHR48105">
    <property type="entry name" value="THIOREDOXIN REDUCTASE 1-RELATED-RELATED"/>
    <property type="match status" value="1"/>
</dbReference>
<dbReference type="Pfam" id="PF07992">
    <property type="entry name" value="Pyr_redox_2"/>
    <property type="match status" value="1"/>
</dbReference>
<dbReference type="PRINTS" id="PR00368">
    <property type="entry name" value="FADPNR"/>
</dbReference>
<dbReference type="PRINTS" id="PR00469">
    <property type="entry name" value="PNDRDTASEII"/>
</dbReference>
<dbReference type="SUPFAM" id="SSF51905">
    <property type="entry name" value="FAD/NAD(P)-binding domain"/>
    <property type="match status" value="1"/>
</dbReference>
<evidence type="ECO:0000255" key="1">
    <source>
        <dbReference type="HAMAP-Rule" id="MF_01685"/>
    </source>
</evidence>
<comment type="catalytic activity">
    <reaction evidence="1">
        <text>2 reduced [2Fe-2S]-[ferredoxin] + NADP(+) + H(+) = 2 oxidized [2Fe-2S]-[ferredoxin] + NADPH</text>
        <dbReference type="Rhea" id="RHEA:20125"/>
        <dbReference type="Rhea" id="RHEA-COMP:10000"/>
        <dbReference type="Rhea" id="RHEA-COMP:10001"/>
        <dbReference type="ChEBI" id="CHEBI:15378"/>
        <dbReference type="ChEBI" id="CHEBI:33737"/>
        <dbReference type="ChEBI" id="CHEBI:33738"/>
        <dbReference type="ChEBI" id="CHEBI:57783"/>
        <dbReference type="ChEBI" id="CHEBI:58349"/>
        <dbReference type="EC" id="1.18.1.2"/>
    </reaction>
</comment>
<comment type="cofactor">
    <cofactor evidence="1">
        <name>FAD</name>
        <dbReference type="ChEBI" id="CHEBI:57692"/>
    </cofactor>
    <text evidence="1">Binds 1 FAD per subunit.</text>
</comment>
<comment type="subunit">
    <text evidence="1">Homodimer.</text>
</comment>
<comment type="similarity">
    <text evidence="1">Belongs to the ferredoxin--NADP reductase type 2 family.</text>
</comment>
<reference key="1">
    <citation type="submission" date="2008-05" db="EMBL/GenBank/DDBJ databases">
        <title>Complete sequence of chromosome 1 of Ralstonia pickettii 12J.</title>
        <authorList>
            <person name="Lucas S."/>
            <person name="Copeland A."/>
            <person name="Lapidus A."/>
            <person name="Glavina del Rio T."/>
            <person name="Dalin E."/>
            <person name="Tice H."/>
            <person name="Bruce D."/>
            <person name="Goodwin L."/>
            <person name="Pitluck S."/>
            <person name="Meincke L."/>
            <person name="Brettin T."/>
            <person name="Detter J.C."/>
            <person name="Han C."/>
            <person name="Kuske C.R."/>
            <person name="Schmutz J."/>
            <person name="Larimer F."/>
            <person name="Land M."/>
            <person name="Hauser L."/>
            <person name="Kyrpides N."/>
            <person name="Mikhailova N."/>
            <person name="Marsh T."/>
            <person name="Richardson P."/>
        </authorList>
    </citation>
    <scope>NUCLEOTIDE SEQUENCE [LARGE SCALE GENOMIC DNA]</scope>
    <source>
        <strain>12J</strain>
    </source>
</reference>
<name>FENR_RALPJ</name>
<feature type="chain" id="PRO_0000364909" description="Ferredoxin--NADP reductase">
    <location>
        <begin position="1"/>
        <end position="359"/>
    </location>
</feature>
<feature type="binding site" evidence="1">
    <location>
        <position position="48"/>
    </location>
    <ligand>
        <name>FAD</name>
        <dbReference type="ChEBI" id="CHEBI:57692"/>
    </ligand>
</feature>
<feature type="binding site" evidence="1">
    <location>
        <position position="56"/>
    </location>
    <ligand>
        <name>FAD</name>
        <dbReference type="ChEBI" id="CHEBI:57692"/>
    </ligand>
</feature>
<feature type="binding site" evidence="1">
    <location>
        <position position="61"/>
    </location>
    <ligand>
        <name>FAD</name>
        <dbReference type="ChEBI" id="CHEBI:57692"/>
    </ligand>
</feature>
<feature type="binding site" evidence="1">
    <location>
        <position position="101"/>
    </location>
    <ligand>
        <name>FAD</name>
        <dbReference type="ChEBI" id="CHEBI:57692"/>
    </ligand>
</feature>
<feature type="binding site" evidence="1">
    <location>
        <position position="139"/>
    </location>
    <ligand>
        <name>FAD</name>
        <dbReference type="ChEBI" id="CHEBI:57692"/>
    </ligand>
</feature>
<feature type="binding site" evidence="1">
    <location>
        <position position="304"/>
    </location>
    <ligand>
        <name>FAD</name>
        <dbReference type="ChEBI" id="CHEBI:57692"/>
    </ligand>
</feature>
<feature type="binding site" evidence="1">
    <location>
        <position position="345"/>
    </location>
    <ligand>
        <name>FAD</name>
        <dbReference type="ChEBI" id="CHEBI:57692"/>
    </ligand>
</feature>
<organism>
    <name type="scientific">Ralstonia pickettii (strain 12J)</name>
    <dbReference type="NCBI Taxonomy" id="402626"/>
    <lineage>
        <taxon>Bacteria</taxon>
        <taxon>Pseudomonadati</taxon>
        <taxon>Pseudomonadota</taxon>
        <taxon>Betaproteobacteria</taxon>
        <taxon>Burkholderiales</taxon>
        <taxon>Burkholderiaceae</taxon>
        <taxon>Ralstonia</taxon>
    </lineage>
</organism>
<keyword id="KW-0274">FAD</keyword>
<keyword id="KW-0285">Flavoprotein</keyword>
<keyword id="KW-0521">NADP</keyword>
<keyword id="KW-0560">Oxidoreductase</keyword>